<dbReference type="EMBL" id="BA000017">
    <property type="protein sequence ID" value="BAB57729.1"/>
    <property type="molecule type" value="Genomic_DNA"/>
</dbReference>
<dbReference type="RefSeq" id="WP_000134765.1">
    <property type="nucleotide sequence ID" value="NC_002758.2"/>
</dbReference>
<dbReference type="SMR" id="P64084"/>
<dbReference type="KEGG" id="sav:SAV1567"/>
<dbReference type="HOGENOM" id="CLU_038009_1_0_9"/>
<dbReference type="PhylomeDB" id="P64084"/>
<dbReference type="Proteomes" id="UP000002481">
    <property type="component" value="Chromosome"/>
</dbReference>
<dbReference type="GO" id="GO:0005829">
    <property type="term" value="C:cytosol"/>
    <property type="evidence" value="ECO:0007669"/>
    <property type="project" value="TreeGrafter"/>
</dbReference>
<dbReference type="GO" id="GO:0005886">
    <property type="term" value="C:plasma membrane"/>
    <property type="evidence" value="ECO:0007669"/>
    <property type="project" value="UniProtKB-SubCell"/>
</dbReference>
<dbReference type="GO" id="GO:0005525">
    <property type="term" value="F:GTP binding"/>
    <property type="evidence" value="ECO:0007669"/>
    <property type="project" value="UniProtKB-UniRule"/>
</dbReference>
<dbReference type="GO" id="GO:0003924">
    <property type="term" value="F:GTPase activity"/>
    <property type="evidence" value="ECO:0007669"/>
    <property type="project" value="UniProtKB-UniRule"/>
</dbReference>
<dbReference type="GO" id="GO:0043024">
    <property type="term" value="F:ribosomal small subunit binding"/>
    <property type="evidence" value="ECO:0007669"/>
    <property type="project" value="TreeGrafter"/>
</dbReference>
<dbReference type="GO" id="GO:0070181">
    <property type="term" value="F:small ribosomal subunit rRNA binding"/>
    <property type="evidence" value="ECO:0007669"/>
    <property type="project" value="UniProtKB-UniRule"/>
</dbReference>
<dbReference type="GO" id="GO:0000028">
    <property type="term" value="P:ribosomal small subunit assembly"/>
    <property type="evidence" value="ECO:0007669"/>
    <property type="project" value="TreeGrafter"/>
</dbReference>
<dbReference type="CDD" id="cd04163">
    <property type="entry name" value="Era"/>
    <property type="match status" value="1"/>
</dbReference>
<dbReference type="CDD" id="cd22534">
    <property type="entry name" value="KH-II_Era"/>
    <property type="match status" value="1"/>
</dbReference>
<dbReference type="FunFam" id="3.30.300.20:FF:000003">
    <property type="entry name" value="GTPase Era"/>
    <property type="match status" value="1"/>
</dbReference>
<dbReference type="FunFam" id="3.40.50.300:FF:000094">
    <property type="entry name" value="GTPase Era"/>
    <property type="match status" value="1"/>
</dbReference>
<dbReference type="Gene3D" id="3.30.300.20">
    <property type="match status" value="1"/>
</dbReference>
<dbReference type="Gene3D" id="3.40.50.300">
    <property type="entry name" value="P-loop containing nucleotide triphosphate hydrolases"/>
    <property type="match status" value="1"/>
</dbReference>
<dbReference type="HAMAP" id="MF_00367">
    <property type="entry name" value="GTPase_Era"/>
    <property type="match status" value="1"/>
</dbReference>
<dbReference type="InterPro" id="IPR030388">
    <property type="entry name" value="G_ERA_dom"/>
</dbReference>
<dbReference type="InterPro" id="IPR006073">
    <property type="entry name" value="GTP-bd"/>
</dbReference>
<dbReference type="InterPro" id="IPR005662">
    <property type="entry name" value="GTPase_Era-like"/>
</dbReference>
<dbReference type="InterPro" id="IPR015946">
    <property type="entry name" value="KH_dom-like_a/b"/>
</dbReference>
<dbReference type="InterPro" id="IPR004044">
    <property type="entry name" value="KH_dom_type_2"/>
</dbReference>
<dbReference type="InterPro" id="IPR009019">
    <property type="entry name" value="KH_sf_prok-type"/>
</dbReference>
<dbReference type="InterPro" id="IPR027417">
    <property type="entry name" value="P-loop_NTPase"/>
</dbReference>
<dbReference type="InterPro" id="IPR005225">
    <property type="entry name" value="Small_GTP-bd"/>
</dbReference>
<dbReference type="NCBIfam" id="TIGR00436">
    <property type="entry name" value="era"/>
    <property type="match status" value="1"/>
</dbReference>
<dbReference type="NCBIfam" id="NF000908">
    <property type="entry name" value="PRK00089.1"/>
    <property type="match status" value="1"/>
</dbReference>
<dbReference type="NCBIfam" id="TIGR00231">
    <property type="entry name" value="small_GTP"/>
    <property type="match status" value="1"/>
</dbReference>
<dbReference type="PANTHER" id="PTHR42698">
    <property type="entry name" value="GTPASE ERA"/>
    <property type="match status" value="1"/>
</dbReference>
<dbReference type="PANTHER" id="PTHR42698:SF1">
    <property type="entry name" value="GTPASE ERA, MITOCHONDRIAL"/>
    <property type="match status" value="1"/>
</dbReference>
<dbReference type="Pfam" id="PF07650">
    <property type="entry name" value="KH_2"/>
    <property type="match status" value="1"/>
</dbReference>
<dbReference type="Pfam" id="PF01926">
    <property type="entry name" value="MMR_HSR1"/>
    <property type="match status" value="1"/>
</dbReference>
<dbReference type="SUPFAM" id="SSF52540">
    <property type="entry name" value="P-loop containing nucleoside triphosphate hydrolases"/>
    <property type="match status" value="1"/>
</dbReference>
<dbReference type="SUPFAM" id="SSF54814">
    <property type="entry name" value="Prokaryotic type KH domain (KH-domain type II)"/>
    <property type="match status" value="1"/>
</dbReference>
<dbReference type="PROSITE" id="PS51713">
    <property type="entry name" value="G_ERA"/>
    <property type="match status" value="1"/>
</dbReference>
<dbReference type="PROSITE" id="PS50823">
    <property type="entry name" value="KH_TYPE_2"/>
    <property type="match status" value="1"/>
</dbReference>
<name>ERA_STAAM</name>
<feature type="chain" id="PRO_0000180047" description="GTPase Era">
    <location>
        <begin position="1"/>
        <end position="299"/>
    </location>
</feature>
<feature type="domain" description="Era-type G" evidence="2">
    <location>
        <begin position="5"/>
        <end position="172"/>
    </location>
</feature>
<feature type="domain" description="KH type-2" evidence="1">
    <location>
        <begin position="203"/>
        <end position="280"/>
    </location>
</feature>
<feature type="region of interest" description="G1" evidence="2">
    <location>
        <begin position="13"/>
        <end position="20"/>
    </location>
</feature>
<feature type="region of interest" description="G2" evidence="2">
    <location>
        <begin position="39"/>
        <end position="43"/>
    </location>
</feature>
<feature type="region of interest" description="G3" evidence="2">
    <location>
        <begin position="60"/>
        <end position="63"/>
    </location>
</feature>
<feature type="region of interest" description="G4" evidence="2">
    <location>
        <begin position="122"/>
        <end position="125"/>
    </location>
</feature>
<feature type="region of interest" description="G5" evidence="2">
    <location>
        <begin position="151"/>
        <end position="153"/>
    </location>
</feature>
<feature type="binding site" evidence="1">
    <location>
        <begin position="13"/>
        <end position="20"/>
    </location>
    <ligand>
        <name>GTP</name>
        <dbReference type="ChEBI" id="CHEBI:37565"/>
    </ligand>
</feature>
<feature type="binding site" evidence="1">
    <location>
        <begin position="60"/>
        <end position="64"/>
    </location>
    <ligand>
        <name>GTP</name>
        <dbReference type="ChEBI" id="CHEBI:37565"/>
    </ligand>
</feature>
<feature type="binding site" evidence="1">
    <location>
        <begin position="122"/>
        <end position="125"/>
    </location>
    <ligand>
        <name>GTP</name>
        <dbReference type="ChEBI" id="CHEBI:37565"/>
    </ligand>
</feature>
<reference key="1">
    <citation type="journal article" date="2001" name="Lancet">
        <title>Whole genome sequencing of meticillin-resistant Staphylococcus aureus.</title>
        <authorList>
            <person name="Kuroda M."/>
            <person name="Ohta T."/>
            <person name="Uchiyama I."/>
            <person name="Baba T."/>
            <person name="Yuzawa H."/>
            <person name="Kobayashi I."/>
            <person name="Cui L."/>
            <person name="Oguchi A."/>
            <person name="Aoki K."/>
            <person name="Nagai Y."/>
            <person name="Lian J.-Q."/>
            <person name="Ito T."/>
            <person name="Kanamori M."/>
            <person name="Matsumaru H."/>
            <person name="Maruyama A."/>
            <person name="Murakami H."/>
            <person name="Hosoyama A."/>
            <person name="Mizutani-Ui Y."/>
            <person name="Takahashi N.K."/>
            <person name="Sawano T."/>
            <person name="Inoue R."/>
            <person name="Kaito C."/>
            <person name="Sekimizu K."/>
            <person name="Hirakawa H."/>
            <person name="Kuhara S."/>
            <person name="Goto S."/>
            <person name="Yabuzaki J."/>
            <person name="Kanehisa M."/>
            <person name="Yamashita A."/>
            <person name="Oshima K."/>
            <person name="Furuya K."/>
            <person name="Yoshino C."/>
            <person name="Shiba T."/>
            <person name="Hattori M."/>
            <person name="Ogasawara N."/>
            <person name="Hayashi H."/>
            <person name="Hiramatsu K."/>
        </authorList>
    </citation>
    <scope>NUCLEOTIDE SEQUENCE [LARGE SCALE GENOMIC DNA]</scope>
    <source>
        <strain>Mu50 / ATCC 700699</strain>
    </source>
</reference>
<proteinExistence type="inferred from homology"/>
<accession>P64084</accession>
<accession>Q99TS9</accession>
<sequence>MTEHKSGFVSIIGRPNVGKSTFVNRVIGHKIAIMSDKAQTTRNKIQGVMTRDDAQIIFIDTPGIHKPKHKLGDYMMKVAKNTLSEIDAIMFMVNANEEIGRGDEYIIEMLKNVKTPVFLVLNKIDLVHPDELMPKIEEYQSYMDFTEIVPISALEGLNVDHFIDVLKTYLPEGPKYYPDDQISDHPEQFVVGEIIREKILHLTSEEIPHAIGVNVDRMVKESEDRVHIEATIYVERDSQKGIVIGKGGKKLKEVGKRARRDIEMLLGSKVYLELWVKVQRDWRNKVNFIRQIGYVEDQD</sequence>
<gene>
    <name evidence="1" type="primary">era</name>
    <name type="synonym">bex</name>
    <name type="ordered locus">SAV1567</name>
</gene>
<comment type="function">
    <text evidence="1">An essential GTPase that binds both GDP and GTP, with rapid nucleotide exchange. Plays a role in 16S rRNA processing and 30S ribosomal subunit biogenesis and possibly also in cell cycle regulation and energy metabolism.</text>
</comment>
<comment type="subunit">
    <text evidence="1">Monomer.</text>
</comment>
<comment type="subcellular location">
    <subcellularLocation>
        <location>Cytoplasm</location>
    </subcellularLocation>
    <subcellularLocation>
        <location evidence="1">Cell membrane</location>
        <topology evidence="1">Peripheral membrane protein</topology>
    </subcellularLocation>
</comment>
<comment type="similarity">
    <text evidence="1 2">Belongs to the TRAFAC class TrmE-Era-EngA-EngB-Septin-like GTPase superfamily. Era GTPase family.</text>
</comment>
<organism>
    <name type="scientific">Staphylococcus aureus (strain Mu50 / ATCC 700699)</name>
    <dbReference type="NCBI Taxonomy" id="158878"/>
    <lineage>
        <taxon>Bacteria</taxon>
        <taxon>Bacillati</taxon>
        <taxon>Bacillota</taxon>
        <taxon>Bacilli</taxon>
        <taxon>Bacillales</taxon>
        <taxon>Staphylococcaceae</taxon>
        <taxon>Staphylococcus</taxon>
    </lineage>
</organism>
<keyword id="KW-1003">Cell membrane</keyword>
<keyword id="KW-0963">Cytoplasm</keyword>
<keyword id="KW-0342">GTP-binding</keyword>
<keyword id="KW-0472">Membrane</keyword>
<keyword id="KW-0547">Nucleotide-binding</keyword>
<keyword id="KW-0690">Ribosome biogenesis</keyword>
<keyword id="KW-0694">RNA-binding</keyword>
<keyword id="KW-0699">rRNA-binding</keyword>
<protein>
    <recommendedName>
        <fullName evidence="1">GTPase Era</fullName>
    </recommendedName>
</protein>
<evidence type="ECO:0000255" key="1">
    <source>
        <dbReference type="HAMAP-Rule" id="MF_00367"/>
    </source>
</evidence>
<evidence type="ECO:0000255" key="2">
    <source>
        <dbReference type="PROSITE-ProRule" id="PRU01050"/>
    </source>
</evidence>